<reference key="1">
    <citation type="submission" date="2008-02" db="EMBL/GenBank/DDBJ databases">
        <title>Complete sequence of chromosome of Methylobacterium sp. 4-46.</title>
        <authorList>
            <consortium name="US DOE Joint Genome Institute"/>
            <person name="Copeland A."/>
            <person name="Lucas S."/>
            <person name="Lapidus A."/>
            <person name="Glavina del Rio T."/>
            <person name="Dalin E."/>
            <person name="Tice H."/>
            <person name="Bruce D."/>
            <person name="Goodwin L."/>
            <person name="Pitluck S."/>
            <person name="Chertkov O."/>
            <person name="Brettin T."/>
            <person name="Detter J.C."/>
            <person name="Han C."/>
            <person name="Kuske C.R."/>
            <person name="Schmutz J."/>
            <person name="Larimer F."/>
            <person name="Land M."/>
            <person name="Hauser L."/>
            <person name="Kyrpides N."/>
            <person name="Ivanova N."/>
            <person name="Marx C.J."/>
            <person name="Richardson P."/>
        </authorList>
    </citation>
    <scope>NUCLEOTIDE SEQUENCE [LARGE SCALE GENOMIC DNA]</scope>
    <source>
        <strain>4-46</strain>
    </source>
</reference>
<keyword id="KW-0233">DNA recombination</keyword>
<keyword id="KW-0238">DNA-binding</keyword>
<keyword id="KW-0804">Transcription</keyword>
<keyword id="KW-0805">Transcription regulation</keyword>
<keyword id="KW-0810">Translation regulation</keyword>
<name>IHFA_METS4</name>
<comment type="function">
    <text evidence="1">This protein is one of the two subunits of integration host factor, a specific DNA-binding protein that functions in genetic recombination as well as in transcriptional and translational control.</text>
</comment>
<comment type="subunit">
    <text evidence="1">Heterodimer of an alpha and a beta chain.</text>
</comment>
<comment type="similarity">
    <text evidence="1">Belongs to the bacterial histone-like protein family.</text>
</comment>
<accession>B0UR46</accession>
<organism>
    <name type="scientific">Methylobacterium sp. (strain 4-46)</name>
    <dbReference type="NCBI Taxonomy" id="426117"/>
    <lineage>
        <taxon>Bacteria</taxon>
        <taxon>Pseudomonadati</taxon>
        <taxon>Pseudomonadota</taxon>
        <taxon>Alphaproteobacteria</taxon>
        <taxon>Hyphomicrobiales</taxon>
        <taxon>Methylobacteriaceae</taxon>
        <taxon>Methylobacterium</taxon>
    </lineage>
</organism>
<gene>
    <name evidence="1" type="primary">ihfA</name>
    <name evidence="1" type="synonym">himA</name>
    <name type="ordered locus">M446_6231</name>
</gene>
<protein>
    <recommendedName>
        <fullName evidence="1">Integration host factor subunit alpha</fullName>
        <shortName evidence="1">IHF-alpha</shortName>
    </recommendedName>
</protein>
<feature type="chain" id="PRO_1000122149" description="Integration host factor subunit alpha">
    <location>
        <begin position="1"/>
        <end position="104"/>
    </location>
</feature>
<dbReference type="EMBL" id="CP000943">
    <property type="protein sequence ID" value="ACA20498.1"/>
    <property type="molecule type" value="Genomic_DNA"/>
</dbReference>
<dbReference type="RefSeq" id="WP_012335876.1">
    <property type="nucleotide sequence ID" value="NC_010511.1"/>
</dbReference>
<dbReference type="SMR" id="B0UR46"/>
<dbReference type="STRING" id="426117.M446_6231"/>
<dbReference type="KEGG" id="met:M446_6231"/>
<dbReference type="eggNOG" id="COG0776">
    <property type="taxonomic scope" value="Bacteria"/>
</dbReference>
<dbReference type="HOGENOM" id="CLU_105066_1_1_5"/>
<dbReference type="GO" id="GO:0005829">
    <property type="term" value="C:cytosol"/>
    <property type="evidence" value="ECO:0007669"/>
    <property type="project" value="TreeGrafter"/>
</dbReference>
<dbReference type="GO" id="GO:0003677">
    <property type="term" value="F:DNA binding"/>
    <property type="evidence" value="ECO:0007669"/>
    <property type="project" value="UniProtKB-UniRule"/>
</dbReference>
<dbReference type="GO" id="GO:0030527">
    <property type="term" value="F:structural constituent of chromatin"/>
    <property type="evidence" value="ECO:0007669"/>
    <property type="project" value="InterPro"/>
</dbReference>
<dbReference type="GO" id="GO:0006310">
    <property type="term" value="P:DNA recombination"/>
    <property type="evidence" value="ECO:0007669"/>
    <property type="project" value="UniProtKB-UniRule"/>
</dbReference>
<dbReference type="GO" id="GO:0009893">
    <property type="term" value="P:positive regulation of metabolic process"/>
    <property type="evidence" value="ECO:0007669"/>
    <property type="project" value="UniProtKB-ARBA"/>
</dbReference>
<dbReference type="GO" id="GO:0006355">
    <property type="term" value="P:regulation of DNA-templated transcription"/>
    <property type="evidence" value="ECO:0007669"/>
    <property type="project" value="UniProtKB-UniRule"/>
</dbReference>
<dbReference type="GO" id="GO:0006417">
    <property type="term" value="P:regulation of translation"/>
    <property type="evidence" value="ECO:0007669"/>
    <property type="project" value="UniProtKB-UniRule"/>
</dbReference>
<dbReference type="CDD" id="cd13835">
    <property type="entry name" value="IHF_A"/>
    <property type="match status" value="1"/>
</dbReference>
<dbReference type="FunFam" id="4.10.520.10:FF:000010">
    <property type="entry name" value="Integration host factor subunit alpha"/>
    <property type="match status" value="1"/>
</dbReference>
<dbReference type="Gene3D" id="4.10.520.10">
    <property type="entry name" value="IHF-like DNA-binding proteins"/>
    <property type="match status" value="1"/>
</dbReference>
<dbReference type="HAMAP" id="MF_00380">
    <property type="entry name" value="IHF_alpha"/>
    <property type="match status" value="1"/>
</dbReference>
<dbReference type="InterPro" id="IPR000119">
    <property type="entry name" value="Hist_DNA-bd"/>
</dbReference>
<dbReference type="InterPro" id="IPR020816">
    <property type="entry name" value="Histone-like_DNA-bd_CS"/>
</dbReference>
<dbReference type="InterPro" id="IPR010992">
    <property type="entry name" value="IHF-like_DNA-bd_dom_sf"/>
</dbReference>
<dbReference type="InterPro" id="IPR005684">
    <property type="entry name" value="IHF_alpha"/>
</dbReference>
<dbReference type="NCBIfam" id="TIGR00987">
    <property type="entry name" value="himA"/>
    <property type="match status" value="1"/>
</dbReference>
<dbReference type="NCBIfam" id="NF001401">
    <property type="entry name" value="PRK00285.1"/>
    <property type="match status" value="1"/>
</dbReference>
<dbReference type="PANTHER" id="PTHR33175">
    <property type="entry name" value="DNA-BINDING PROTEIN HU"/>
    <property type="match status" value="1"/>
</dbReference>
<dbReference type="PANTHER" id="PTHR33175:SF2">
    <property type="entry name" value="INTEGRATION HOST FACTOR SUBUNIT ALPHA"/>
    <property type="match status" value="1"/>
</dbReference>
<dbReference type="Pfam" id="PF00216">
    <property type="entry name" value="Bac_DNA_binding"/>
    <property type="match status" value="1"/>
</dbReference>
<dbReference type="PRINTS" id="PR01727">
    <property type="entry name" value="DNABINDINGHU"/>
</dbReference>
<dbReference type="SMART" id="SM00411">
    <property type="entry name" value="BHL"/>
    <property type="match status" value="1"/>
</dbReference>
<dbReference type="SUPFAM" id="SSF47729">
    <property type="entry name" value="IHF-like DNA-binding proteins"/>
    <property type="match status" value="1"/>
</dbReference>
<dbReference type="PROSITE" id="PS00045">
    <property type="entry name" value="HISTONE_LIKE"/>
    <property type="match status" value="1"/>
</dbReference>
<sequence>MAGKTVTRADLTEAVYQRVGLSRTESAALVETVLSEICTCLASGETVKLSSFGSFVVRDKGKRVGRNPKTGVEVAIEPRRVMVFKPSNVLKARINGGAAEPDDE</sequence>
<evidence type="ECO:0000255" key="1">
    <source>
        <dbReference type="HAMAP-Rule" id="MF_00380"/>
    </source>
</evidence>
<proteinExistence type="inferred from homology"/>